<protein>
    <recommendedName>
        <fullName>Translation initiation factor eIF2B subunit alpha</fullName>
    </recommendedName>
    <alternativeName>
        <fullName>eIF2B GDP-GTP exchange factor subunit alpha</fullName>
    </alternativeName>
</protein>
<keyword id="KW-0007">Acetylation</keyword>
<keyword id="KW-0963">Cytoplasm</keyword>
<keyword id="KW-0396">Initiation factor</keyword>
<keyword id="KW-0648">Protein biosynthesis</keyword>
<keyword id="KW-1185">Reference proteome</keyword>
<name>EI2BA_MACFA</name>
<proteinExistence type="evidence at transcript level"/>
<organism>
    <name type="scientific">Macaca fascicularis</name>
    <name type="common">Crab-eating macaque</name>
    <name type="synonym">Cynomolgus monkey</name>
    <dbReference type="NCBI Taxonomy" id="9541"/>
    <lineage>
        <taxon>Eukaryota</taxon>
        <taxon>Metazoa</taxon>
        <taxon>Chordata</taxon>
        <taxon>Craniata</taxon>
        <taxon>Vertebrata</taxon>
        <taxon>Euteleostomi</taxon>
        <taxon>Mammalia</taxon>
        <taxon>Eutheria</taxon>
        <taxon>Euarchontoglires</taxon>
        <taxon>Primates</taxon>
        <taxon>Haplorrhini</taxon>
        <taxon>Catarrhini</taxon>
        <taxon>Cercopithecidae</taxon>
        <taxon>Cercopithecinae</taxon>
        <taxon>Macaca</taxon>
    </lineage>
</organism>
<dbReference type="EMBL" id="AB169786">
    <property type="protein sequence ID" value="BAE01867.1"/>
    <property type="molecule type" value="mRNA"/>
</dbReference>
<dbReference type="RefSeq" id="NP_001271056.1">
    <property type="nucleotide sequence ID" value="NM_001284127.1"/>
</dbReference>
<dbReference type="RefSeq" id="XP_045222137.1">
    <property type="nucleotide sequence ID" value="XM_045366202.2"/>
</dbReference>
<dbReference type="SMR" id="Q4R4V8"/>
<dbReference type="STRING" id="9541.ENSMFAP00000045551"/>
<dbReference type="GeneID" id="101926282"/>
<dbReference type="eggNOG" id="KOG1466">
    <property type="taxonomic scope" value="Eukaryota"/>
</dbReference>
<dbReference type="OrthoDB" id="10249309at2759"/>
<dbReference type="Proteomes" id="UP000233100">
    <property type="component" value="Unplaced"/>
</dbReference>
<dbReference type="GO" id="GO:0005737">
    <property type="term" value="C:cytoplasm"/>
    <property type="evidence" value="ECO:0000250"/>
    <property type="project" value="UniProtKB"/>
</dbReference>
<dbReference type="GO" id="GO:0005829">
    <property type="term" value="C:cytosol"/>
    <property type="evidence" value="ECO:0007669"/>
    <property type="project" value="UniProtKB-SubCell"/>
</dbReference>
<dbReference type="GO" id="GO:0005851">
    <property type="term" value="C:eukaryotic translation initiation factor 2B complex"/>
    <property type="evidence" value="ECO:0000250"/>
    <property type="project" value="UniProtKB"/>
</dbReference>
<dbReference type="GO" id="GO:0005085">
    <property type="term" value="F:guanyl-nucleotide exchange factor activity"/>
    <property type="evidence" value="ECO:0000250"/>
    <property type="project" value="UniProtKB"/>
</dbReference>
<dbReference type="GO" id="GO:0003743">
    <property type="term" value="F:translation initiation factor activity"/>
    <property type="evidence" value="ECO:0007669"/>
    <property type="project" value="UniProtKB-KW"/>
</dbReference>
<dbReference type="GO" id="GO:0002183">
    <property type="term" value="P:cytoplasmic translational initiation"/>
    <property type="evidence" value="ECO:0000250"/>
    <property type="project" value="UniProtKB"/>
</dbReference>
<dbReference type="GO" id="GO:0014003">
    <property type="term" value="P:oligodendrocyte development"/>
    <property type="evidence" value="ECO:0000250"/>
    <property type="project" value="UniProtKB"/>
</dbReference>
<dbReference type="GO" id="GO:0050852">
    <property type="term" value="P:T cell receptor signaling pathway"/>
    <property type="evidence" value="ECO:0000250"/>
    <property type="project" value="UniProtKB"/>
</dbReference>
<dbReference type="GO" id="GO:0006413">
    <property type="term" value="P:translational initiation"/>
    <property type="evidence" value="ECO:0000250"/>
    <property type="project" value="UniProtKB"/>
</dbReference>
<dbReference type="FunFam" id="1.20.120.1070:FF:000001">
    <property type="entry name" value="Eukaryotic translation initiation factor 2B subunit alpha"/>
    <property type="match status" value="1"/>
</dbReference>
<dbReference type="FunFam" id="3.40.50.10470:FF:000001">
    <property type="entry name" value="Translation initiation factor eIF-2B subunit alpha"/>
    <property type="match status" value="1"/>
</dbReference>
<dbReference type="Gene3D" id="3.40.50.10470">
    <property type="entry name" value="Translation initiation factor eif-2b, domain 2"/>
    <property type="match status" value="1"/>
</dbReference>
<dbReference type="Gene3D" id="1.20.120.1070">
    <property type="entry name" value="Translation initiation factor eIF-2B, N-terminal domain"/>
    <property type="match status" value="1"/>
</dbReference>
<dbReference type="InterPro" id="IPR051501">
    <property type="entry name" value="eIF2B_alpha/beta/delta"/>
</dbReference>
<dbReference type="InterPro" id="IPR042528">
    <property type="entry name" value="elF-2B_alpha_N"/>
</dbReference>
<dbReference type="InterPro" id="IPR000649">
    <property type="entry name" value="IF-2B-related"/>
</dbReference>
<dbReference type="InterPro" id="IPR042529">
    <property type="entry name" value="IF_2B-like_C"/>
</dbReference>
<dbReference type="InterPro" id="IPR037171">
    <property type="entry name" value="NagB/RpiA_transferase-like"/>
</dbReference>
<dbReference type="PANTHER" id="PTHR45860">
    <property type="entry name" value="TRANSLATION INITIATION FACTOR EIF-2B SUBUNIT ALPHA"/>
    <property type="match status" value="1"/>
</dbReference>
<dbReference type="PANTHER" id="PTHR45860:SF1">
    <property type="entry name" value="TRANSLATION INITIATION FACTOR EIF-2B SUBUNIT ALPHA"/>
    <property type="match status" value="1"/>
</dbReference>
<dbReference type="Pfam" id="PF01008">
    <property type="entry name" value="IF-2B"/>
    <property type="match status" value="1"/>
</dbReference>
<dbReference type="SUPFAM" id="SSF100950">
    <property type="entry name" value="NagB/RpiA/CoA transferase-like"/>
    <property type="match status" value="1"/>
</dbReference>
<evidence type="ECO:0000250" key="1">
    <source>
        <dbReference type="UniProtKB" id="Q14232"/>
    </source>
</evidence>
<evidence type="ECO:0000250" key="2">
    <source>
        <dbReference type="UniProtKB" id="Q9USP0"/>
    </source>
</evidence>
<evidence type="ECO:0000305" key="3"/>
<reference key="1">
    <citation type="submission" date="2005-06" db="EMBL/GenBank/DDBJ databases">
        <title>DNA sequences of macaque genes expressed in brain or testis and its evolutionary implications.</title>
        <authorList>
            <consortium name="International consortium for macaque cDNA sequencing and analysis"/>
        </authorList>
    </citation>
    <scope>NUCLEOTIDE SEQUENCE [LARGE SCALE MRNA]</scope>
    <source>
        <tissue>Temporal cortex</tissue>
    </source>
</reference>
<feature type="chain" id="PRO_0000223469" description="Translation initiation factor eIF2B subunit alpha">
    <location>
        <begin position="1"/>
        <end position="305"/>
    </location>
</feature>
<feature type="modified residue" description="N6-acetyllysine" evidence="1">
    <location>
        <position position="35"/>
    </location>
</feature>
<comment type="function">
    <text evidence="1">Acts as a component of the translation initiation factor 2B (eIF2B) complex, which catalyzes the exchange of GDP for GTP on eukaryotic initiation factor 2 (eIF2) gamma subunit. Its guanine nucleotide exchange factor activity is repressed when bound to eIF2 complex phosphorylated on the alpha subunit, thereby limiting the amount of methionyl-initiator methionine tRNA available to the ribosome and consequently global translation is repressed.</text>
</comment>
<comment type="activity regulation">
    <text evidence="1">Activated by the chemical integrated stress response (ISR) inhibitor ISRIB which stimulates guanine nucleotide exchange factor activity for both phosphorylated and unphosphorylated eIF2.</text>
</comment>
<comment type="subunit">
    <text evidence="1">Component of the translation initiation factor 2B (eIF2B) complex which is a heterodecamer of two sets of five different subunits: alpha, beta, gamma, delta and epsilon. Subunits alpha, beta and delta comprise a regulatory subcomplex and subunits epsilon and gamma comprise a catalytic subcomplex. Within the complex, the hexameric regulatory complex resides at the center, with the two heterodimeric catalytic subcomplexes bound on opposite sides.</text>
</comment>
<comment type="subcellular location">
    <subcellularLocation>
        <location evidence="2">Cytoplasm</location>
        <location evidence="2">Cytosol</location>
    </subcellularLocation>
</comment>
<comment type="similarity">
    <text evidence="3">Belongs to the eIF-2B alpha/beta/delta subunits family.</text>
</comment>
<sequence length="305" mass="33714">MDDKELIEYFKSQMKEDPDMASAVAAIRTLLEFLKRDKGETIQGLRANLTSAIETLCGVDSSVAVSSGGELFLRFISLTSLEYSDYSKCKKIMIERGELFLRRISLSRNKIADLCHTFIKDGATILTHAYSRVVLRVLEAAVAAKKRFSVYVTESQPDLSGKKMAKALCHLNVPVTVVLDAAVGYIMEKADLVIVGAEGVVENGGIINKIGTNQMAVCAKAQNKPFYAVAESFKFVRLFPLNQQDVPDKFKYKADTLKVAQTGQDLKEEHPWVDYTAPSLITLLFTDLGVLTPSAVSDELIKLYL</sequence>
<gene>
    <name type="primary">EIF2B1</name>
    <name type="ORF">QtrA-13377</name>
</gene>
<accession>Q4R4V8</accession>